<keyword id="KW-0472">Membrane</keyword>
<keyword id="KW-1185">Reference proteome</keyword>
<keyword id="KW-0812">Transmembrane</keyword>
<keyword id="KW-1133">Transmembrane helix</keyword>
<feature type="chain" id="PRO_0000303970" description="Putative uncharacterized membrane protein PB18E9.05c">
    <location>
        <begin position="1"/>
        <end position="90"/>
    </location>
</feature>
<feature type="transmembrane region" description="Helical" evidence="1">
    <location>
        <begin position="17"/>
        <end position="37"/>
    </location>
</feature>
<feature type="transmembrane region" description="Helical" evidence="1">
    <location>
        <begin position="55"/>
        <end position="75"/>
    </location>
</feature>
<protein>
    <recommendedName>
        <fullName>Putative uncharacterized membrane protein PB18E9.05c</fullName>
    </recommendedName>
</protein>
<sequence>MNEVISQPPCNIFRPLILSMHLSPVSILSPVLLIYLVIHSQNELVSMSWLFRSTICFGVSLFLSFFLVRILWGIAYSYNSNSMSIYFSYI</sequence>
<organism>
    <name type="scientific">Schizosaccharomyces pombe (strain 972 / ATCC 24843)</name>
    <name type="common">Fission yeast</name>
    <dbReference type="NCBI Taxonomy" id="284812"/>
    <lineage>
        <taxon>Eukaryota</taxon>
        <taxon>Fungi</taxon>
        <taxon>Dikarya</taxon>
        <taxon>Ascomycota</taxon>
        <taxon>Taphrinomycotina</taxon>
        <taxon>Schizosaccharomycetes</taxon>
        <taxon>Schizosaccharomycetales</taxon>
        <taxon>Schizosaccharomycetaceae</taxon>
        <taxon>Schizosaccharomyces</taxon>
    </lineage>
</organism>
<dbReference type="EMBL" id="CU329670">
    <property type="protein sequence ID" value="CAD27471.1"/>
    <property type="molecule type" value="Genomic_DNA"/>
</dbReference>
<dbReference type="RefSeq" id="NP_001018273.1">
    <property type="nucleotide sequence ID" value="NM_001019828.1"/>
</dbReference>
<dbReference type="SMR" id="Q8TFG3"/>
<dbReference type="PaxDb" id="4896-SPAPB18E9.05c.1"/>
<dbReference type="EnsemblFungi" id="SPAPB18E9.05c.1">
    <property type="protein sequence ID" value="SPAPB18E9.05c.1:pep"/>
    <property type="gene ID" value="SPAPB18E9.05c"/>
</dbReference>
<dbReference type="KEGG" id="spo:3361424"/>
<dbReference type="PomBase" id="SPAPB18E9.05c"/>
<dbReference type="VEuPathDB" id="FungiDB:SPAPB18E9.05c"/>
<dbReference type="HOGENOM" id="CLU_2442128_0_0_1"/>
<dbReference type="InParanoid" id="Q8TFG3"/>
<dbReference type="PRO" id="PR:Q8TFG3"/>
<dbReference type="Proteomes" id="UP000002485">
    <property type="component" value="Chromosome I"/>
</dbReference>
<dbReference type="GO" id="GO:0016020">
    <property type="term" value="C:membrane"/>
    <property type="evidence" value="ECO:0007669"/>
    <property type="project" value="UniProtKB-SubCell"/>
</dbReference>
<proteinExistence type="predicted"/>
<gene>
    <name type="ORF">SPAPB18E9.05c</name>
</gene>
<accession>Q8TFG3</accession>
<name>YL55_SCHPO</name>
<evidence type="ECO:0000255" key="1"/>
<evidence type="ECO:0000305" key="2"/>
<comment type="subcellular location">
    <subcellularLocation>
        <location evidence="2">Membrane</location>
        <topology evidence="2">Multi-pass membrane protein</topology>
    </subcellularLocation>
</comment>
<reference key="1">
    <citation type="journal article" date="2002" name="Nature">
        <title>The genome sequence of Schizosaccharomyces pombe.</title>
        <authorList>
            <person name="Wood V."/>
            <person name="Gwilliam R."/>
            <person name="Rajandream M.A."/>
            <person name="Lyne M.H."/>
            <person name="Lyne R."/>
            <person name="Stewart A."/>
            <person name="Sgouros J.G."/>
            <person name="Peat N."/>
            <person name="Hayles J."/>
            <person name="Baker S.G."/>
            <person name="Basham D."/>
            <person name="Bowman S."/>
            <person name="Brooks K."/>
            <person name="Brown D."/>
            <person name="Brown S."/>
            <person name="Chillingworth T."/>
            <person name="Churcher C.M."/>
            <person name="Collins M."/>
            <person name="Connor R."/>
            <person name="Cronin A."/>
            <person name="Davis P."/>
            <person name="Feltwell T."/>
            <person name="Fraser A."/>
            <person name="Gentles S."/>
            <person name="Goble A."/>
            <person name="Hamlin N."/>
            <person name="Harris D.E."/>
            <person name="Hidalgo J."/>
            <person name="Hodgson G."/>
            <person name="Holroyd S."/>
            <person name="Hornsby T."/>
            <person name="Howarth S."/>
            <person name="Huckle E.J."/>
            <person name="Hunt S."/>
            <person name="Jagels K."/>
            <person name="James K.D."/>
            <person name="Jones L."/>
            <person name="Jones M."/>
            <person name="Leather S."/>
            <person name="McDonald S."/>
            <person name="McLean J."/>
            <person name="Mooney P."/>
            <person name="Moule S."/>
            <person name="Mungall K.L."/>
            <person name="Murphy L.D."/>
            <person name="Niblett D."/>
            <person name="Odell C."/>
            <person name="Oliver K."/>
            <person name="O'Neil S."/>
            <person name="Pearson D."/>
            <person name="Quail M.A."/>
            <person name="Rabbinowitsch E."/>
            <person name="Rutherford K.M."/>
            <person name="Rutter S."/>
            <person name="Saunders D."/>
            <person name="Seeger K."/>
            <person name="Sharp S."/>
            <person name="Skelton J."/>
            <person name="Simmonds M.N."/>
            <person name="Squares R."/>
            <person name="Squares S."/>
            <person name="Stevens K."/>
            <person name="Taylor K."/>
            <person name="Taylor R.G."/>
            <person name="Tivey A."/>
            <person name="Walsh S.V."/>
            <person name="Warren T."/>
            <person name="Whitehead S."/>
            <person name="Woodward J.R."/>
            <person name="Volckaert G."/>
            <person name="Aert R."/>
            <person name="Robben J."/>
            <person name="Grymonprez B."/>
            <person name="Weltjens I."/>
            <person name="Vanstreels E."/>
            <person name="Rieger M."/>
            <person name="Schaefer M."/>
            <person name="Mueller-Auer S."/>
            <person name="Gabel C."/>
            <person name="Fuchs M."/>
            <person name="Duesterhoeft A."/>
            <person name="Fritzc C."/>
            <person name="Holzer E."/>
            <person name="Moestl D."/>
            <person name="Hilbert H."/>
            <person name="Borzym K."/>
            <person name="Langer I."/>
            <person name="Beck A."/>
            <person name="Lehrach H."/>
            <person name="Reinhardt R."/>
            <person name="Pohl T.M."/>
            <person name="Eger P."/>
            <person name="Zimmermann W."/>
            <person name="Wedler H."/>
            <person name="Wambutt R."/>
            <person name="Purnelle B."/>
            <person name="Goffeau A."/>
            <person name="Cadieu E."/>
            <person name="Dreano S."/>
            <person name="Gloux S."/>
            <person name="Lelaure V."/>
            <person name="Mottier S."/>
            <person name="Galibert F."/>
            <person name="Aves S.J."/>
            <person name="Xiang Z."/>
            <person name="Hunt C."/>
            <person name="Moore K."/>
            <person name="Hurst S.M."/>
            <person name="Lucas M."/>
            <person name="Rochet M."/>
            <person name="Gaillardin C."/>
            <person name="Tallada V.A."/>
            <person name="Garzon A."/>
            <person name="Thode G."/>
            <person name="Daga R.R."/>
            <person name="Cruzado L."/>
            <person name="Jimenez J."/>
            <person name="Sanchez M."/>
            <person name="del Rey F."/>
            <person name="Benito J."/>
            <person name="Dominguez A."/>
            <person name="Revuelta J.L."/>
            <person name="Moreno S."/>
            <person name="Armstrong J."/>
            <person name="Forsburg S.L."/>
            <person name="Cerutti L."/>
            <person name="Lowe T."/>
            <person name="McCombie W.R."/>
            <person name="Paulsen I."/>
            <person name="Potashkin J."/>
            <person name="Shpakovski G.V."/>
            <person name="Ussery D."/>
            <person name="Barrell B.G."/>
            <person name="Nurse P."/>
        </authorList>
    </citation>
    <scope>NUCLEOTIDE SEQUENCE [LARGE SCALE GENOMIC DNA]</scope>
    <source>
        <strain>972 / ATCC 24843</strain>
    </source>
</reference>